<evidence type="ECO:0000255" key="1">
    <source>
        <dbReference type="HAMAP-Rule" id="MF_01337"/>
    </source>
</evidence>
<evidence type="ECO:0000305" key="2"/>
<dbReference type="EMBL" id="CP000027">
    <property type="protein sequence ID" value="AAW40276.1"/>
    <property type="molecule type" value="Genomic_DNA"/>
</dbReference>
<dbReference type="RefSeq" id="WP_010936267.1">
    <property type="nucleotide sequence ID" value="NC_002936.3"/>
</dbReference>
<dbReference type="SMR" id="Q3Z965"/>
<dbReference type="FunCoup" id="Q3Z965">
    <property type="interactions" value="353"/>
</dbReference>
<dbReference type="STRING" id="243164.DET0490"/>
<dbReference type="GeneID" id="3230240"/>
<dbReference type="KEGG" id="det:DET0490"/>
<dbReference type="eggNOG" id="COG0256">
    <property type="taxonomic scope" value="Bacteria"/>
</dbReference>
<dbReference type="HOGENOM" id="CLU_098841_0_1_0"/>
<dbReference type="InParanoid" id="Q3Z965"/>
<dbReference type="Proteomes" id="UP000008289">
    <property type="component" value="Chromosome"/>
</dbReference>
<dbReference type="GO" id="GO:0005737">
    <property type="term" value="C:cytoplasm"/>
    <property type="evidence" value="ECO:0007669"/>
    <property type="project" value="UniProtKB-ARBA"/>
</dbReference>
<dbReference type="GO" id="GO:1990904">
    <property type="term" value="C:ribonucleoprotein complex"/>
    <property type="evidence" value="ECO:0007669"/>
    <property type="project" value="UniProtKB-KW"/>
</dbReference>
<dbReference type="GO" id="GO:0005840">
    <property type="term" value="C:ribosome"/>
    <property type="evidence" value="ECO:0007669"/>
    <property type="project" value="UniProtKB-KW"/>
</dbReference>
<dbReference type="GO" id="GO:0008097">
    <property type="term" value="F:5S rRNA binding"/>
    <property type="evidence" value="ECO:0007669"/>
    <property type="project" value="TreeGrafter"/>
</dbReference>
<dbReference type="GO" id="GO:0003735">
    <property type="term" value="F:structural constituent of ribosome"/>
    <property type="evidence" value="ECO:0007669"/>
    <property type="project" value="InterPro"/>
</dbReference>
<dbReference type="GO" id="GO:0006412">
    <property type="term" value="P:translation"/>
    <property type="evidence" value="ECO:0007669"/>
    <property type="project" value="UniProtKB-UniRule"/>
</dbReference>
<dbReference type="CDD" id="cd00432">
    <property type="entry name" value="Ribosomal_L18_L5e"/>
    <property type="match status" value="1"/>
</dbReference>
<dbReference type="FunFam" id="3.30.420.100:FF:000001">
    <property type="entry name" value="50S ribosomal protein L18"/>
    <property type="match status" value="1"/>
</dbReference>
<dbReference type="Gene3D" id="3.30.420.100">
    <property type="match status" value="1"/>
</dbReference>
<dbReference type="HAMAP" id="MF_01337_B">
    <property type="entry name" value="Ribosomal_uL18_B"/>
    <property type="match status" value="1"/>
</dbReference>
<dbReference type="InterPro" id="IPR004389">
    <property type="entry name" value="Ribosomal_uL18_bac-type"/>
</dbReference>
<dbReference type="InterPro" id="IPR005484">
    <property type="entry name" value="Ribosomal_uL18_bac/euk"/>
</dbReference>
<dbReference type="NCBIfam" id="TIGR00060">
    <property type="entry name" value="L18_bact"/>
    <property type="match status" value="1"/>
</dbReference>
<dbReference type="PANTHER" id="PTHR12899">
    <property type="entry name" value="39S RIBOSOMAL PROTEIN L18, MITOCHONDRIAL"/>
    <property type="match status" value="1"/>
</dbReference>
<dbReference type="PANTHER" id="PTHR12899:SF3">
    <property type="entry name" value="LARGE RIBOSOMAL SUBUNIT PROTEIN UL18M"/>
    <property type="match status" value="1"/>
</dbReference>
<dbReference type="Pfam" id="PF00861">
    <property type="entry name" value="Ribosomal_L18p"/>
    <property type="match status" value="1"/>
</dbReference>
<dbReference type="SUPFAM" id="SSF53137">
    <property type="entry name" value="Translational machinery components"/>
    <property type="match status" value="1"/>
</dbReference>
<keyword id="KW-0687">Ribonucleoprotein</keyword>
<keyword id="KW-0689">Ribosomal protein</keyword>
<keyword id="KW-0694">RNA-binding</keyword>
<keyword id="KW-0699">rRNA-binding</keyword>
<organism>
    <name type="scientific">Dehalococcoides mccartyi (strain ATCC BAA-2266 / KCTC 15142 / 195)</name>
    <name type="common">Dehalococcoides ethenogenes (strain 195)</name>
    <dbReference type="NCBI Taxonomy" id="243164"/>
    <lineage>
        <taxon>Bacteria</taxon>
        <taxon>Bacillati</taxon>
        <taxon>Chloroflexota</taxon>
        <taxon>Dehalococcoidia</taxon>
        <taxon>Dehalococcoidales</taxon>
        <taxon>Dehalococcoidaceae</taxon>
        <taxon>Dehalococcoides</taxon>
    </lineage>
</organism>
<protein>
    <recommendedName>
        <fullName evidence="1">Large ribosomal subunit protein uL18</fullName>
    </recommendedName>
    <alternativeName>
        <fullName evidence="2">50S ribosomal protein L18</fullName>
    </alternativeName>
</protein>
<reference key="1">
    <citation type="journal article" date="2005" name="Science">
        <title>Genome sequence of the PCE-dechlorinating bacterium Dehalococcoides ethenogenes.</title>
        <authorList>
            <person name="Seshadri R."/>
            <person name="Adrian L."/>
            <person name="Fouts D.E."/>
            <person name="Eisen J.A."/>
            <person name="Phillippy A.M."/>
            <person name="Methe B.A."/>
            <person name="Ward N.L."/>
            <person name="Nelson W.C."/>
            <person name="DeBoy R.T."/>
            <person name="Khouri H.M."/>
            <person name="Kolonay J.F."/>
            <person name="Dodson R.J."/>
            <person name="Daugherty S.C."/>
            <person name="Brinkac L.M."/>
            <person name="Sullivan S.A."/>
            <person name="Madupu R."/>
            <person name="Nelson K.E."/>
            <person name="Kang K.H."/>
            <person name="Impraim M."/>
            <person name="Tran K."/>
            <person name="Robinson J.M."/>
            <person name="Forberger H.A."/>
            <person name="Fraser C.M."/>
            <person name="Zinder S.H."/>
            <person name="Heidelberg J.F."/>
        </authorList>
    </citation>
    <scope>NUCLEOTIDE SEQUENCE [LARGE SCALE GENOMIC DNA]</scope>
    <source>
        <strain>ATCC BAA-2266 / KCTC 15142 / 195</strain>
    </source>
</reference>
<gene>
    <name evidence="1" type="primary">rplR</name>
    <name type="ordered locus">DET0490</name>
</gene>
<name>RL18_DEHM1</name>
<sequence length="121" mass="13331">MAKVNAREARIVRHERLRKKVSGTEARPRLCVFRSIENIYTQVINDNCGSTLVQASTKDAELKAELDGKTKTEQAVVIGNLIAKRSLEAGISEVVFDRGGYKYHGRVKALAEAARSGGLKF</sequence>
<feature type="chain" id="PRO_0000251305" description="Large ribosomal subunit protein uL18">
    <location>
        <begin position="1"/>
        <end position="121"/>
    </location>
</feature>
<comment type="function">
    <text evidence="1">This is one of the proteins that bind and probably mediate the attachment of the 5S RNA into the large ribosomal subunit, where it forms part of the central protuberance.</text>
</comment>
<comment type="subunit">
    <text evidence="1">Part of the 50S ribosomal subunit; part of the 5S rRNA/L5/L18/L25 subcomplex. Contacts the 5S and 23S rRNAs.</text>
</comment>
<comment type="similarity">
    <text evidence="1">Belongs to the universal ribosomal protein uL18 family.</text>
</comment>
<accession>Q3Z965</accession>
<proteinExistence type="inferred from homology"/>